<evidence type="ECO:0000255" key="1">
    <source>
        <dbReference type="HAMAP-Rule" id="MF_01872"/>
    </source>
</evidence>
<keyword id="KW-0963">Cytoplasm</keyword>
<keyword id="KW-0489">Methyltransferase</keyword>
<keyword id="KW-0949">S-adenosyl-L-methionine</keyword>
<keyword id="KW-0808">Transferase</keyword>
<keyword id="KW-0819">tRNA processing</keyword>
<organism>
    <name type="scientific">Klebsiella pneumoniae (strain 342)</name>
    <dbReference type="NCBI Taxonomy" id="507522"/>
    <lineage>
        <taxon>Bacteria</taxon>
        <taxon>Pseudomonadati</taxon>
        <taxon>Pseudomonadota</taxon>
        <taxon>Gammaproteobacteria</taxon>
        <taxon>Enterobacterales</taxon>
        <taxon>Enterobacteriaceae</taxon>
        <taxon>Klebsiella/Raoultella group</taxon>
        <taxon>Klebsiella</taxon>
        <taxon>Klebsiella pneumoniae complex</taxon>
    </lineage>
</organism>
<protein>
    <recommendedName>
        <fullName evidence="1">tRNA1(Val) (adenine(37)-N6)-methyltransferase</fullName>
        <ecNumber evidence="1">2.1.1.223</ecNumber>
    </recommendedName>
    <alternativeName>
        <fullName evidence="1">tRNA m6A37 methyltransferase</fullName>
    </alternativeName>
</protein>
<reference key="1">
    <citation type="journal article" date="2008" name="PLoS Genet.">
        <title>Complete genome sequence of the N2-fixing broad host range endophyte Klebsiella pneumoniae 342 and virulence predictions verified in mice.</title>
        <authorList>
            <person name="Fouts D.E."/>
            <person name="Tyler H.L."/>
            <person name="DeBoy R.T."/>
            <person name="Daugherty S."/>
            <person name="Ren Q."/>
            <person name="Badger J.H."/>
            <person name="Durkin A.S."/>
            <person name="Huot H."/>
            <person name="Shrivastava S."/>
            <person name="Kothari S."/>
            <person name="Dodson R.J."/>
            <person name="Mohamoud Y."/>
            <person name="Khouri H."/>
            <person name="Roesch L.F.W."/>
            <person name="Krogfelt K.A."/>
            <person name="Struve C."/>
            <person name="Triplett E.W."/>
            <person name="Methe B.A."/>
        </authorList>
    </citation>
    <scope>NUCLEOTIDE SEQUENCE [LARGE SCALE GENOMIC DNA]</scope>
    <source>
        <strain>342</strain>
    </source>
</reference>
<gene>
    <name type="ordered locus">KPK_1222</name>
</gene>
<accession>B5XNG1</accession>
<name>TRMN6_KLEP3</name>
<proteinExistence type="inferred from homology"/>
<feature type="chain" id="PRO_0000387389" description="tRNA1(Val) (adenine(37)-N6)-methyltransferase">
    <location>
        <begin position="1"/>
        <end position="245"/>
    </location>
</feature>
<sequence length="245" mass="27103">MSQSKFALPRNGFTFKQFFVAHDRCAMKVGTDGILLGAWAPIAGVKHVLDIGAGSGLLALMLAQRTDHDVQVDAVELDEEAAAQARENALASPWSSRIEVCQADIHQWQPSQTRRYELIISNPPFFAEGVPCATSQREQARYTTTLDHASLLTCAAEHITEEGFFCVVLPVDIGNAFIERATAMGWHLRLRTDVAETELRPPHRVLLAFSPTAGECFCDRLAIRGPEQQYSEGFTALTGDFYLFM</sequence>
<dbReference type="EC" id="2.1.1.223" evidence="1"/>
<dbReference type="EMBL" id="CP000964">
    <property type="protein sequence ID" value="ACI08416.1"/>
    <property type="molecule type" value="Genomic_DNA"/>
</dbReference>
<dbReference type="SMR" id="B5XNG1"/>
<dbReference type="KEGG" id="kpe:KPK_1222"/>
<dbReference type="HOGENOM" id="CLU_061983_0_0_6"/>
<dbReference type="BioCyc" id="KPNE507522:GI0B-1221-MONOMER"/>
<dbReference type="Proteomes" id="UP000001734">
    <property type="component" value="Chromosome"/>
</dbReference>
<dbReference type="GO" id="GO:0005737">
    <property type="term" value="C:cytoplasm"/>
    <property type="evidence" value="ECO:0007669"/>
    <property type="project" value="UniProtKB-SubCell"/>
</dbReference>
<dbReference type="GO" id="GO:0003676">
    <property type="term" value="F:nucleic acid binding"/>
    <property type="evidence" value="ECO:0007669"/>
    <property type="project" value="InterPro"/>
</dbReference>
<dbReference type="GO" id="GO:0016430">
    <property type="term" value="F:tRNA (adenine-N6)-methyltransferase activity"/>
    <property type="evidence" value="ECO:0007669"/>
    <property type="project" value="UniProtKB-UniRule"/>
</dbReference>
<dbReference type="GO" id="GO:0032259">
    <property type="term" value="P:methylation"/>
    <property type="evidence" value="ECO:0007669"/>
    <property type="project" value="UniProtKB-KW"/>
</dbReference>
<dbReference type="GO" id="GO:0008033">
    <property type="term" value="P:tRNA processing"/>
    <property type="evidence" value="ECO:0007669"/>
    <property type="project" value="UniProtKB-UniRule"/>
</dbReference>
<dbReference type="CDD" id="cd02440">
    <property type="entry name" value="AdoMet_MTases"/>
    <property type="match status" value="1"/>
</dbReference>
<dbReference type="Gene3D" id="3.40.50.150">
    <property type="entry name" value="Vaccinia Virus protein VP39"/>
    <property type="match status" value="1"/>
</dbReference>
<dbReference type="HAMAP" id="MF_01872">
    <property type="entry name" value="tRNA_methyltr_YfiC"/>
    <property type="match status" value="1"/>
</dbReference>
<dbReference type="InterPro" id="IPR002052">
    <property type="entry name" value="DNA_methylase_N6_adenine_CS"/>
</dbReference>
<dbReference type="InterPro" id="IPR029063">
    <property type="entry name" value="SAM-dependent_MTases_sf"/>
</dbReference>
<dbReference type="InterPro" id="IPR007848">
    <property type="entry name" value="Small_mtfrase_dom"/>
</dbReference>
<dbReference type="InterPro" id="IPR050210">
    <property type="entry name" value="tRNA_Adenine-N(6)_MTase"/>
</dbReference>
<dbReference type="InterPro" id="IPR022882">
    <property type="entry name" value="tRNA_adenine-N6_MeTrfase"/>
</dbReference>
<dbReference type="NCBIfam" id="NF047853">
    <property type="entry name" value="tRm6a37MtseTrmN"/>
    <property type="match status" value="1"/>
</dbReference>
<dbReference type="PANTHER" id="PTHR47739">
    <property type="entry name" value="TRNA1(VAL) (ADENINE(37)-N6)-METHYLTRANSFERASE"/>
    <property type="match status" value="1"/>
</dbReference>
<dbReference type="PANTHER" id="PTHR47739:SF1">
    <property type="entry name" value="TRNA1(VAL) (ADENINE(37)-N6)-METHYLTRANSFERASE"/>
    <property type="match status" value="1"/>
</dbReference>
<dbReference type="Pfam" id="PF05175">
    <property type="entry name" value="MTS"/>
    <property type="match status" value="1"/>
</dbReference>
<dbReference type="SUPFAM" id="SSF53335">
    <property type="entry name" value="S-adenosyl-L-methionine-dependent methyltransferases"/>
    <property type="match status" value="1"/>
</dbReference>
<dbReference type="PROSITE" id="PS00092">
    <property type="entry name" value="N6_MTASE"/>
    <property type="match status" value="1"/>
</dbReference>
<comment type="function">
    <text evidence="1">Specifically methylates the adenine in position 37 of tRNA(1)(Val) (anticodon cmo5UAC).</text>
</comment>
<comment type="catalytic activity">
    <reaction evidence="1">
        <text>adenosine(37) in tRNA1(Val) + S-adenosyl-L-methionine = N(6)-methyladenosine(37) in tRNA1(Val) + S-adenosyl-L-homocysteine + H(+)</text>
        <dbReference type="Rhea" id="RHEA:43160"/>
        <dbReference type="Rhea" id="RHEA-COMP:10369"/>
        <dbReference type="Rhea" id="RHEA-COMP:10370"/>
        <dbReference type="ChEBI" id="CHEBI:15378"/>
        <dbReference type="ChEBI" id="CHEBI:57856"/>
        <dbReference type="ChEBI" id="CHEBI:59789"/>
        <dbReference type="ChEBI" id="CHEBI:74411"/>
        <dbReference type="ChEBI" id="CHEBI:74449"/>
        <dbReference type="EC" id="2.1.1.223"/>
    </reaction>
</comment>
<comment type="subcellular location">
    <subcellularLocation>
        <location evidence="1">Cytoplasm</location>
    </subcellularLocation>
</comment>
<comment type="similarity">
    <text evidence="1">Belongs to the methyltransferase superfamily. tRNA (adenine-N(6)-)-methyltransferase family.</text>
</comment>